<accession>Q5ZRQ0</accession>
<organism>
    <name type="scientific">Legionella pneumophila subsp. pneumophila (strain Philadelphia 1 / ATCC 33152 / DSM 7513)</name>
    <dbReference type="NCBI Taxonomy" id="272624"/>
    <lineage>
        <taxon>Bacteria</taxon>
        <taxon>Pseudomonadati</taxon>
        <taxon>Pseudomonadota</taxon>
        <taxon>Gammaproteobacteria</taxon>
        <taxon>Legionellales</taxon>
        <taxon>Legionellaceae</taxon>
        <taxon>Legionella</taxon>
    </lineage>
</organism>
<gene>
    <name type="primary">lubX</name>
    <name type="synonym">legU2</name>
    <name type="ordered locus">lpg2830</name>
</gene>
<feature type="chain" id="PRO_0000395863" description="E3 ubiquitin-protein ligase LubX">
    <location>
        <begin position="1"/>
        <end position="246"/>
    </location>
</feature>
<feature type="domain" description="U-box 1">
    <location>
        <begin position="36"/>
        <end position="109"/>
    </location>
</feature>
<feature type="domain" description="U-box 2">
    <location>
        <begin position="131"/>
        <end position="204"/>
    </location>
</feature>
<feature type="mutagenesis site" description="Loss of ubiquitin ligase activity." evidence="1">
    <original>I</original>
    <variation>A</variation>
    <location>
        <position position="45"/>
    </location>
</feature>
<feature type="mutagenesis site" description="No change in ubiquitin ligase activity." evidence="1">
    <original>I</original>
    <variation>A</variation>
    <location>
        <position position="140"/>
    </location>
</feature>
<feature type="helix" evidence="3">
    <location>
        <begin position="18"/>
        <end position="31"/>
    </location>
</feature>
<feature type="turn" evidence="3">
    <location>
        <begin position="39"/>
        <end position="41"/>
    </location>
</feature>
<feature type="turn" evidence="3">
    <location>
        <begin position="44"/>
        <end position="47"/>
    </location>
</feature>
<feature type="strand" evidence="3">
    <location>
        <begin position="50"/>
        <end position="52"/>
    </location>
</feature>
<feature type="helix" evidence="3">
    <location>
        <begin position="64"/>
        <end position="73"/>
    </location>
</feature>
<feature type="turn" evidence="3">
    <location>
        <begin position="78"/>
        <end position="80"/>
    </location>
</feature>
<feature type="turn" evidence="3">
    <location>
        <begin position="86"/>
        <end position="88"/>
    </location>
</feature>
<feature type="helix" evidence="3">
    <location>
        <begin position="93"/>
        <end position="95"/>
    </location>
</feature>
<feature type="helix" evidence="3">
    <location>
        <begin position="96"/>
        <end position="125"/>
    </location>
</feature>
<feature type="helix" evidence="3">
    <location>
        <begin position="134"/>
        <end position="136"/>
    </location>
</feature>
<feature type="turn" evidence="3">
    <location>
        <begin position="139"/>
        <end position="141"/>
    </location>
</feature>
<feature type="strand" evidence="3">
    <location>
        <begin position="146"/>
        <end position="150"/>
    </location>
</feature>
<feature type="strand" evidence="3">
    <location>
        <begin position="152"/>
        <end position="154"/>
    </location>
</feature>
<feature type="strand" evidence="3">
    <location>
        <begin position="156"/>
        <end position="158"/>
    </location>
</feature>
<feature type="helix" evidence="3">
    <location>
        <begin position="159"/>
        <end position="168"/>
    </location>
</feature>
<feature type="turn" evidence="3">
    <location>
        <begin position="174"/>
        <end position="176"/>
    </location>
</feature>
<feature type="helix" evidence="3">
    <location>
        <begin position="181"/>
        <end position="183"/>
    </location>
</feature>
<feature type="strand" evidence="3">
    <location>
        <begin position="184"/>
        <end position="186"/>
    </location>
</feature>
<feature type="helix" evidence="3">
    <location>
        <begin position="188"/>
        <end position="202"/>
    </location>
</feature>
<comment type="function">
    <text evidence="1">Effector proteins function to alter host cell physiology and promote bacterial survival in host tissues. This protein is an E3 ubiquitin ligase that interferes with host's ubiquitination pathway. Acts in conjunction with host E2 ubiquitin-conjugating enzymes UBE2D1 (UBCH5A) or UBE2D3 (UBCH5C), and mediates polyubiquitination of host kinase CLK1.</text>
</comment>
<comment type="catalytic activity">
    <reaction>
        <text>S-ubiquitinyl-[E2 ubiquitin-conjugating enzyme]-L-cysteine + [acceptor protein]-L-lysine = [E2 ubiquitin-conjugating enzyme]-L-cysteine + N(6)-ubiquitinyl-[acceptor protein]-L-lysine.</text>
        <dbReference type="EC" id="2.3.2.27"/>
    </reaction>
</comment>
<comment type="subunit">
    <text evidence="1">Interacts with host CLK1.</text>
</comment>
<comment type="interaction">
    <interactant intactId="EBI-6402540">
        <id>Q5ZRQ0</id>
    </interactant>
    <interactant intactId="EBI-6479117">
        <id>P22518</id>
        <label>Clk1</label>
    </interactant>
    <organismsDiffer>true</organismsDiffer>
    <experiments>3</experiments>
</comment>
<comment type="subcellular location">
    <subcellularLocation>
        <location evidence="1">Secreted</location>
    </subcellularLocation>
    <subcellularLocation>
        <location evidence="1">Host cell</location>
    </subcellularLocation>
    <text>Secreted via type IV secretion system (T4SS), and delivered into the host cell.</text>
</comment>
<comment type="induction">
    <text evidence="1">Induced upon infection.</text>
</comment>
<comment type="domain">
    <text evidence="1">U-box 1 is critical to the ubiquitin ligase activity, and U-box 2 mediates interaction with host CLK1.</text>
</comment>
<comment type="domain">
    <text evidence="1">The 25 C-terminal region may carry the signal responsible for translocation into the host cell.</text>
</comment>
<comment type="PTM">
    <text evidence="1">Ubiquitinated in the presence of host E1 ubiquitin-activating enzyme, E2 ubiquitin-conjugating enzyme (UBE2D1 or UBE2D3) and ubiquitin.</text>
</comment>
<protein>
    <recommendedName>
        <fullName>E3 ubiquitin-protein ligase LubX</fullName>
        <ecNumber>2.3.2.27</ecNumber>
    </recommendedName>
    <alternativeName>
        <fullName>Legionella U-box protein</fullName>
    </alternativeName>
    <alternativeName>
        <fullName evidence="2">RING-type E3 ubiquitin transferase LubX</fullName>
    </alternativeName>
</protein>
<evidence type="ECO:0000269" key="1">
    <source>
    </source>
</evidence>
<evidence type="ECO:0000305" key="2"/>
<evidence type="ECO:0007829" key="3">
    <source>
        <dbReference type="PDB" id="8QHC"/>
    </source>
</evidence>
<sequence>MGYRIEMATRNPFDIDHKSKYLREAALEANLSHPETTPTMLTCPIDSGFLKDPVITPEGFVYNKSSILKWLETKKEDPQSRKPLTAKDLQPFPELLIIVNRFVETQTNYEKLKNRLVQNARVAARQKEYTEIPDIFLCPISKTLIKTPVITAQGKVYDQEALSNFLIATGNKDETGKKLSIDDVVVFDELYQQIKVYNFYRKREMQKNQIQPSVSSGFGFFSLNFLTSWLWGTEEKKEKTSSDMTY</sequence>
<proteinExistence type="evidence at protein level"/>
<reference key="1">
    <citation type="journal article" date="2004" name="Science">
        <title>The genomic sequence of the accidental pathogen Legionella pneumophila.</title>
        <authorList>
            <person name="Chien M."/>
            <person name="Morozova I."/>
            <person name="Shi S."/>
            <person name="Sheng H."/>
            <person name="Chen J."/>
            <person name="Gomez S.M."/>
            <person name="Asamani G."/>
            <person name="Hill K."/>
            <person name="Nuara J."/>
            <person name="Feder M."/>
            <person name="Rineer J."/>
            <person name="Greenberg J.J."/>
            <person name="Steshenko V."/>
            <person name="Park S.H."/>
            <person name="Zhao B."/>
            <person name="Teplitskaya E."/>
            <person name="Edwards J.R."/>
            <person name="Pampou S."/>
            <person name="Georghiou A."/>
            <person name="Chou I.-C."/>
            <person name="Iannuccilli W."/>
            <person name="Ulz M.E."/>
            <person name="Kim D.H."/>
            <person name="Geringer-Sameth A."/>
            <person name="Goldsberry C."/>
            <person name="Morozov P."/>
            <person name="Fischer S.G."/>
            <person name="Segal G."/>
            <person name="Qu X."/>
            <person name="Rzhetsky A."/>
            <person name="Zhang P."/>
            <person name="Cayanis E."/>
            <person name="De Jong P.J."/>
            <person name="Ju J."/>
            <person name="Kalachikov S."/>
            <person name="Shuman H.A."/>
            <person name="Russo J.J."/>
        </authorList>
    </citation>
    <scope>NUCLEOTIDE SEQUENCE [LARGE SCALE GENOMIC DNA]</scope>
    <source>
        <strain>Philadelphia 1 / ATCC 33152 / DSM 7513</strain>
    </source>
</reference>
<reference key="2">
    <citation type="journal article" date="2008" name="Mol. Microbiol.">
        <title>Legionella translocates an E3 ubiquitin ligase that has multiple U-boxes with distinct functions.</title>
        <authorList>
            <person name="Kubori T."/>
            <person name="Hyakutake A."/>
            <person name="Nagai H."/>
        </authorList>
    </citation>
    <scope>FUNCTION</scope>
    <scope>UBIQUITIN LIGASE ACTIVITY</scope>
    <scope>UBIQUITINATION</scope>
    <scope>INTERACTION WITH HOST CLK1</scope>
    <scope>SUBCELLULAR LOCATION</scope>
    <scope>INDUCTION</scope>
    <scope>DOMAIN</scope>
    <scope>MUTAGENESIS OF ILE-45 AND ILE-140</scope>
    <source>
        <strain>Lp01</strain>
    </source>
</reference>
<keyword id="KW-0002">3D-structure</keyword>
<keyword id="KW-1185">Reference proteome</keyword>
<keyword id="KW-0677">Repeat</keyword>
<keyword id="KW-0964">Secreted</keyword>
<keyword id="KW-0808">Transferase</keyword>
<keyword id="KW-0832">Ubl conjugation</keyword>
<keyword id="KW-0833">Ubl conjugation pathway</keyword>
<keyword id="KW-0843">Virulence</keyword>
<name>LUBX_LEGPH</name>
<dbReference type="EC" id="2.3.2.27"/>
<dbReference type="EMBL" id="AE017354">
    <property type="protein sequence ID" value="AAU28878.1"/>
    <property type="molecule type" value="Genomic_DNA"/>
</dbReference>
<dbReference type="RefSeq" id="WP_010948517.1">
    <property type="nucleotide sequence ID" value="NC_002942.5"/>
</dbReference>
<dbReference type="RefSeq" id="YP_096825.1">
    <property type="nucleotide sequence ID" value="NC_002942.5"/>
</dbReference>
<dbReference type="PDB" id="8QHC">
    <property type="method" value="EM"/>
    <property type="resolution" value="3.10 A"/>
    <property type="chains" value="D=1-246"/>
</dbReference>
<dbReference type="PDBsum" id="8QHC"/>
<dbReference type="SMR" id="Q5ZRQ0"/>
<dbReference type="DIP" id="DIP-59158N"/>
<dbReference type="IntAct" id="Q5ZRQ0">
    <property type="interactions" value="3"/>
</dbReference>
<dbReference type="STRING" id="272624.lpg2830"/>
<dbReference type="PaxDb" id="272624-lpg2830"/>
<dbReference type="GeneID" id="57036828"/>
<dbReference type="KEGG" id="lpn:lpg2830"/>
<dbReference type="PATRIC" id="fig|272624.6.peg.3015"/>
<dbReference type="eggNOG" id="COG5113">
    <property type="taxonomic scope" value="Bacteria"/>
</dbReference>
<dbReference type="HOGENOM" id="CLU_1127976_0_0_6"/>
<dbReference type="OrthoDB" id="5637399at2"/>
<dbReference type="Proteomes" id="UP000000609">
    <property type="component" value="Chromosome"/>
</dbReference>
<dbReference type="GO" id="GO:0005737">
    <property type="term" value="C:cytoplasm"/>
    <property type="evidence" value="ECO:0007669"/>
    <property type="project" value="TreeGrafter"/>
</dbReference>
<dbReference type="GO" id="GO:0005576">
    <property type="term" value="C:extracellular region"/>
    <property type="evidence" value="ECO:0000314"/>
    <property type="project" value="UniProtKB"/>
</dbReference>
<dbReference type="GO" id="GO:0043657">
    <property type="term" value="C:host cell"/>
    <property type="evidence" value="ECO:0000314"/>
    <property type="project" value="UniProtKB"/>
</dbReference>
<dbReference type="GO" id="GO:0051087">
    <property type="term" value="F:protein-folding chaperone binding"/>
    <property type="evidence" value="ECO:0007669"/>
    <property type="project" value="TreeGrafter"/>
</dbReference>
<dbReference type="GO" id="GO:0061630">
    <property type="term" value="F:ubiquitin protein ligase activity"/>
    <property type="evidence" value="ECO:0007669"/>
    <property type="project" value="TreeGrafter"/>
</dbReference>
<dbReference type="GO" id="GO:0004842">
    <property type="term" value="F:ubiquitin-protein transferase activity"/>
    <property type="evidence" value="ECO:0000314"/>
    <property type="project" value="UniProtKB"/>
</dbReference>
<dbReference type="GO" id="GO:0071218">
    <property type="term" value="P:cellular response to misfolded protein"/>
    <property type="evidence" value="ECO:0007669"/>
    <property type="project" value="TreeGrafter"/>
</dbReference>
<dbReference type="GO" id="GO:0045862">
    <property type="term" value="P:positive regulation of proteolysis"/>
    <property type="evidence" value="ECO:0007669"/>
    <property type="project" value="TreeGrafter"/>
</dbReference>
<dbReference type="GO" id="GO:0043161">
    <property type="term" value="P:proteasome-mediated ubiquitin-dependent protein catabolic process"/>
    <property type="evidence" value="ECO:0007669"/>
    <property type="project" value="TreeGrafter"/>
</dbReference>
<dbReference type="GO" id="GO:0000209">
    <property type="term" value="P:protein polyubiquitination"/>
    <property type="evidence" value="ECO:0007669"/>
    <property type="project" value="TreeGrafter"/>
</dbReference>
<dbReference type="GO" id="GO:0006515">
    <property type="term" value="P:protein quality control for misfolded or incompletely synthesized proteins"/>
    <property type="evidence" value="ECO:0007669"/>
    <property type="project" value="TreeGrafter"/>
</dbReference>
<dbReference type="GO" id="GO:0016567">
    <property type="term" value="P:protein ubiquitination"/>
    <property type="evidence" value="ECO:0000314"/>
    <property type="project" value="UniProtKB"/>
</dbReference>
<dbReference type="CDD" id="cd16453">
    <property type="entry name" value="RING-Ubox"/>
    <property type="match status" value="1"/>
</dbReference>
<dbReference type="CDD" id="cd23149">
    <property type="entry name" value="RING-Ubox_LubX-like_rpt1"/>
    <property type="match status" value="1"/>
</dbReference>
<dbReference type="Gene3D" id="3.30.40.10">
    <property type="entry name" value="Zinc/RING finger domain, C3HC4 (zinc finger)"/>
    <property type="match status" value="2"/>
</dbReference>
<dbReference type="InterPro" id="IPR003613">
    <property type="entry name" value="Ubox_domain"/>
</dbReference>
<dbReference type="InterPro" id="IPR013083">
    <property type="entry name" value="Znf_RING/FYVE/PHD"/>
</dbReference>
<dbReference type="PANTHER" id="PTHR46803">
    <property type="entry name" value="E3 UBIQUITIN-PROTEIN LIGASE CHIP"/>
    <property type="match status" value="1"/>
</dbReference>
<dbReference type="PANTHER" id="PTHR46803:SF2">
    <property type="entry name" value="E3 UBIQUITIN-PROTEIN LIGASE CHIP"/>
    <property type="match status" value="1"/>
</dbReference>
<dbReference type="Pfam" id="PF04564">
    <property type="entry name" value="U-box"/>
    <property type="match status" value="2"/>
</dbReference>
<dbReference type="SMART" id="SM00504">
    <property type="entry name" value="Ubox"/>
    <property type="match status" value="2"/>
</dbReference>
<dbReference type="SUPFAM" id="SSF57850">
    <property type="entry name" value="RING/U-box"/>
    <property type="match status" value="2"/>
</dbReference>
<dbReference type="PROSITE" id="PS51698">
    <property type="entry name" value="U_BOX"/>
    <property type="match status" value="2"/>
</dbReference>